<organism>
    <name type="scientific">Rickettsia bellii (strain OSU 85-389)</name>
    <dbReference type="NCBI Taxonomy" id="391896"/>
    <lineage>
        <taxon>Bacteria</taxon>
        <taxon>Pseudomonadati</taxon>
        <taxon>Pseudomonadota</taxon>
        <taxon>Alphaproteobacteria</taxon>
        <taxon>Rickettsiales</taxon>
        <taxon>Rickettsiaceae</taxon>
        <taxon>Rickettsieae</taxon>
        <taxon>Rickettsia</taxon>
        <taxon>belli group</taxon>
    </lineage>
</organism>
<sequence length="192" mass="21875">MIDVPHEVIEKLQIFQDLVQKWNKAINLISENSTQNFWKRHILDSLQLIQYINDKEIHLVDIGSGAGFPGIILSIAGVASTSLIEADLRKCIFLEKAAKISNNNIQIINQRIEKTEISCNILTCRAFSNLNTIFDCTKNISVQNKFLLPKGKSYLSEIKEARKKWLFKCLINQSITSKESKILEISDLTKII</sequence>
<protein>
    <recommendedName>
        <fullName evidence="1">Ribosomal RNA small subunit methyltransferase G</fullName>
        <ecNumber evidence="1">2.1.1.170</ecNumber>
    </recommendedName>
    <alternativeName>
        <fullName evidence="1">16S rRNA 7-methylguanosine methyltransferase</fullName>
        <shortName evidence="1">16S rRNA m7G methyltransferase</shortName>
    </alternativeName>
</protein>
<name>RSMG_RICB8</name>
<keyword id="KW-0963">Cytoplasm</keyword>
<keyword id="KW-0489">Methyltransferase</keyword>
<keyword id="KW-0698">rRNA processing</keyword>
<keyword id="KW-0949">S-adenosyl-L-methionine</keyword>
<keyword id="KW-0808">Transferase</keyword>
<feature type="chain" id="PRO_1000010196" description="Ribosomal RNA small subunit methyltransferase G">
    <location>
        <begin position="1"/>
        <end position="192"/>
    </location>
</feature>
<feature type="binding site" evidence="1">
    <location>
        <position position="63"/>
    </location>
    <ligand>
        <name>S-adenosyl-L-methionine</name>
        <dbReference type="ChEBI" id="CHEBI:59789"/>
    </ligand>
</feature>
<feature type="binding site" evidence="1">
    <location>
        <position position="68"/>
    </location>
    <ligand>
        <name>S-adenosyl-L-methionine</name>
        <dbReference type="ChEBI" id="CHEBI:59789"/>
    </ligand>
</feature>
<feature type="binding site" evidence="1">
    <location>
        <begin position="112"/>
        <end position="113"/>
    </location>
    <ligand>
        <name>S-adenosyl-L-methionine</name>
        <dbReference type="ChEBI" id="CHEBI:59789"/>
    </ligand>
</feature>
<feature type="binding site" evidence="1">
    <location>
        <position position="125"/>
    </location>
    <ligand>
        <name>S-adenosyl-L-methionine</name>
        <dbReference type="ChEBI" id="CHEBI:59789"/>
    </ligand>
</feature>
<dbReference type="EC" id="2.1.1.170" evidence="1"/>
<dbReference type="EMBL" id="CP000849">
    <property type="protein sequence ID" value="ABV78559.1"/>
    <property type="molecule type" value="Genomic_DNA"/>
</dbReference>
<dbReference type="RefSeq" id="WP_011478001.1">
    <property type="nucleotide sequence ID" value="NC_009883.1"/>
</dbReference>
<dbReference type="SMR" id="A8GUR2"/>
<dbReference type="KEGG" id="rbo:A1I_00795"/>
<dbReference type="HOGENOM" id="CLU_065341_1_1_5"/>
<dbReference type="GO" id="GO:0005829">
    <property type="term" value="C:cytosol"/>
    <property type="evidence" value="ECO:0007669"/>
    <property type="project" value="TreeGrafter"/>
</dbReference>
<dbReference type="GO" id="GO:0070043">
    <property type="term" value="F:rRNA (guanine-N7-)-methyltransferase activity"/>
    <property type="evidence" value="ECO:0007669"/>
    <property type="project" value="UniProtKB-UniRule"/>
</dbReference>
<dbReference type="Gene3D" id="3.40.50.150">
    <property type="entry name" value="Vaccinia Virus protein VP39"/>
    <property type="match status" value="1"/>
</dbReference>
<dbReference type="HAMAP" id="MF_00074">
    <property type="entry name" value="16SrRNA_methyltr_G"/>
    <property type="match status" value="1"/>
</dbReference>
<dbReference type="InterPro" id="IPR003682">
    <property type="entry name" value="rRNA_ssu_MeTfrase_G"/>
</dbReference>
<dbReference type="InterPro" id="IPR029063">
    <property type="entry name" value="SAM-dependent_MTases_sf"/>
</dbReference>
<dbReference type="NCBIfam" id="TIGR00138">
    <property type="entry name" value="rsmG_gidB"/>
    <property type="match status" value="1"/>
</dbReference>
<dbReference type="PANTHER" id="PTHR31760">
    <property type="entry name" value="S-ADENOSYL-L-METHIONINE-DEPENDENT METHYLTRANSFERASES SUPERFAMILY PROTEIN"/>
    <property type="match status" value="1"/>
</dbReference>
<dbReference type="PANTHER" id="PTHR31760:SF0">
    <property type="entry name" value="S-ADENOSYL-L-METHIONINE-DEPENDENT METHYLTRANSFERASES SUPERFAMILY PROTEIN"/>
    <property type="match status" value="1"/>
</dbReference>
<dbReference type="Pfam" id="PF02527">
    <property type="entry name" value="GidB"/>
    <property type="match status" value="1"/>
</dbReference>
<dbReference type="PIRSF" id="PIRSF003078">
    <property type="entry name" value="GidB"/>
    <property type="match status" value="1"/>
</dbReference>
<dbReference type="SUPFAM" id="SSF53335">
    <property type="entry name" value="S-adenosyl-L-methionine-dependent methyltransferases"/>
    <property type="match status" value="1"/>
</dbReference>
<evidence type="ECO:0000255" key="1">
    <source>
        <dbReference type="HAMAP-Rule" id="MF_00074"/>
    </source>
</evidence>
<comment type="function">
    <text evidence="1">Specifically methylates the N7 position of guanine in position 527 of 16S rRNA.</text>
</comment>
<comment type="catalytic activity">
    <reaction evidence="1">
        <text>guanosine(527) in 16S rRNA + S-adenosyl-L-methionine = N(7)-methylguanosine(527) in 16S rRNA + S-adenosyl-L-homocysteine</text>
        <dbReference type="Rhea" id="RHEA:42732"/>
        <dbReference type="Rhea" id="RHEA-COMP:10209"/>
        <dbReference type="Rhea" id="RHEA-COMP:10210"/>
        <dbReference type="ChEBI" id="CHEBI:57856"/>
        <dbReference type="ChEBI" id="CHEBI:59789"/>
        <dbReference type="ChEBI" id="CHEBI:74269"/>
        <dbReference type="ChEBI" id="CHEBI:74480"/>
        <dbReference type="EC" id="2.1.1.170"/>
    </reaction>
</comment>
<comment type="subcellular location">
    <subcellularLocation>
        <location evidence="1">Cytoplasm</location>
    </subcellularLocation>
</comment>
<comment type="similarity">
    <text evidence="1">Belongs to the methyltransferase superfamily. RNA methyltransferase RsmG family.</text>
</comment>
<gene>
    <name evidence="1" type="primary">rsmG</name>
    <name type="ordered locus">A1I_00795</name>
</gene>
<reference key="1">
    <citation type="submission" date="2007-09" db="EMBL/GenBank/DDBJ databases">
        <title>Complete genome sequencing of Rickettsia bellii.</title>
        <authorList>
            <person name="Madan A."/>
            <person name="Lee H."/>
            <person name="Madan A."/>
            <person name="Yoon J.-G."/>
            <person name="Ryu G.-Y."/>
            <person name="Dasch G."/>
            <person name="Ereemeva M."/>
        </authorList>
    </citation>
    <scope>NUCLEOTIDE SEQUENCE [LARGE SCALE GENOMIC DNA]</scope>
    <source>
        <strain>OSU 85-389</strain>
    </source>
</reference>
<accession>A8GUR2</accession>
<proteinExistence type="inferred from homology"/>